<protein>
    <recommendedName>
        <fullName>Chemotaxis protein CheW</fullName>
    </recommendedName>
</protein>
<evidence type="ECO:0000255" key="1">
    <source>
        <dbReference type="PROSITE-ProRule" id="PRU00052"/>
    </source>
</evidence>
<evidence type="ECO:0000269" key="2">
    <source>
    </source>
</evidence>
<evidence type="ECO:0000305" key="3"/>
<evidence type="ECO:0007829" key="4">
    <source>
        <dbReference type="PDB" id="2HO9"/>
    </source>
</evidence>
<keyword id="KW-0002">3D-structure</keyword>
<keyword id="KW-0145">Chemotaxis</keyword>
<keyword id="KW-0963">Cytoplasm</keyword>
<keyword id="KW-1185">Reference proteome</keyword>
<sequence length="167" mass="18084">MTGMTNVTKLASEPSGQEFLVFTLGDEEYGIDILKVQEIRGYDQVTRIANTPAFIKGVTNLRGVIVPIVDLRIKFSQVDVDYNDNTVVIVLNLGQRVVGIVVDGVSDVLSLTAEQIRPAPEFAVTLSTEYLTGLGALGDRMLILVNIEKLLNSEEMALLDSAASEVA</sequence>
<proteinExistence type="evidence at protein level"/>
<reference key="1">
    <citation type="journal article" date="1986" name="J. Bacteriol.">
        <title>Nucleotide sequence corresponding to five chemotaxis genes in Escherichia coli.</title>
        <authorList>
            <person name="Mutoh N."/>
            <person name="Simon M.I."/>
        </authorList>
    </citation>
    <scope>NUCLEOTIDE SEQUENCE [GENOMIC DNA]</scope>
</reference>
<reference key="2">
    <citation type="journal article" date="1996" name="DNA Res.">
        <title>A 460-kb DNA sequence of the Escherichia coli K-12 genome corresponding to the 40.1-50.0 min region on the linkage map.</title>
        <authorList>
            <person name="Itoh T."/>
            <person name="Aiba H."/>
            <person name="Baba T."/>
            <person name="Fujita K."/>
            <person name="Hayashi K."/>
            <person name="Inada T."/>
            <person name="Isono K."/>
            <person name="Kasai H."/>
            <person name="Kimura S."/>
            <person name="Kitakawa M."/>
            <person name="Kitagawa M."/>
            <person name="Makino K."/>
            <person name="Miki T."/>
            <person name="Mizobuchi K."/>
            <person name="Mori H."/>
            <person name="Mori T."/>
            <person name="Motomura K."/>
            <person name="Nakade S."/>
            <person name="Nakamura Y."/>
            <person name="Nashimoto H."/>
            <person name="Nishio Y."/>
            <person name="Oshima T."/>
            <person name="Saito N."/>
            <person name="Sampei G."/>
            <person name="Seki Y."/>
            <person name="Sivasundaram S."/>
            <person name="Tagami H."/>
            <person name="Takeda J."/>
            <person name="Takemoto K."/>
            <person name="Wada C."/>
            <person name="Yamamoto Y."/>
            <person name="Horiuchi T."/>
        </authorList>
    </citation>
    <scope>NUCLEOTIDE SEQUENCE [LARGE SCALE GENOMIC DNA]</scope>
    <source>
        <strain>K12 / W3110 / ATCC 27325 / DSM 5911</strain>
    </source>
</reference>
<reference key="3">
    <citation type="journal article" date="1997" name="Science">
        <title>The complete genome sequence of Escherichia coli K-12.</title>
        <authorList>
            <person name="Blattner F.R."/>
            <person name="Plunkett G. III"/>
            <person name="Bloch C.A."/>
            <person name="Perna N.T."/>
            <person name="Burland V."/>
            <person name="Riley M."/>
            <person name="Collado-Vides J."/>
            <person name="Glasner J.D."/>
            <person name="Rode C.K."/>
            <person name="Mayhew G.F."/>
            <person name="Gregor J."/>
            <person name="Davis N.W."/>
            <person name="Kirkpatrick H.A."/>
            <person name="Goeden M.A."/>
            <person name="Rose D.J."/>
            <person name="Mau B."/>
            <person name="Shao Y."/>
        </authorList>
    </citation>
    <scope>NUCLEOTIDE SEQUENCE [LARGE SCALE GENOMIC DNA]</scope>
    <source>
        <strain>K12 / MG1655 / ATCC 47076</strain>
    </source>
</reference>
<reference key="4">
    <citation type="journal article" date="2006" name="Mol. Syst. Biol.">
        <title>Highly accurate genome sequences of Escherichia coli K-12 strains MG1655 and W3110.</title>
        <authorList>
            <person name="Hayashi K."/>
            <person name="Morooka N."/>
            <person name="Yamamoto Y."/>
            <person name="Fujita K."/>
            <person name="Isono K."/>
            <person name="Choi S."/>
            <person name="Ohtsubo E."/>
            <person name="Baba T."/>
            <person name="Wanner B.L."/>
            <person name="Mori H."/>
            <person name="Horiuchi T."/>
        </authorList>
    </citation>
    <scope>NUCLEOTIDE SEQUENCE [LARGE SCALE GENOMIC DNA]</scope>
    <source>
        <strain>K12 / W3110 / ATCC 27325 / DSM 5911</strain>
    </source>
</reference>
<reference key="5">
    <citation type="journal article" date="1991" name="J. Bacteriol.">
        <title>Tandem translation starts in the cheA locus of Escherichia coli.</title>
        <authorList>
            <person name="Kofoid E.C."/>
            <person name="Parkinson J.S."/>
        </authorList>
    </citation>
    <scope>NUCLEOTIDE SEQUENCE [GENOMIC DNA] OF 1-32</scope>
</reference>
<reference key="6">
    <citation type="journal article" date="1991" name="Proc. Natl. Acad. Sci. U.S.A.">
        <title>Bacterial chemotaxis signaling complexes: formation of a CheA/CheW complex enhances autophosphorylation and affinity for CheY.</title>
        <authorList>
            <person name="McNally D.F."/>
            <person name="Matsumura P."/>
        </authorList>
    </citation>
    <scope>SUBUNIT</scope>
</reference>
<name>CHEW_ECOLI</name>
<organism>
    <name type="scientific">Escherichia coli (strain K12)</name>
    <dbReference type="NCBI Taxonomy" id="83333"/>
    <lineage>
        <taxon>Bacteria</taxon>
        <taxon>Pseudomonadati</taxon>
        <taxon>Pseudomonadota</taxon>
        <taxon>Gammaproteobacteria</taxon>
        <taxon>Enterobacterales</taxon>
        <taxon>Enterobacteriaceae</taxon>
        <taxon>Escherichia</taxon>
    </lineage>
</organism>
<feature type="chain" id="PRO_0000198341" description="Chemotaxis protein CheW">
    <location>
        <begin position="1"/>
        <end position="167"/>
    </location>
</feature>
<feature type="domain" description="CheW-like" evidence="1">
    <location>
        <begin position="16"/>
        <end position="156"/>
    </location>
</feature>
<feature type="sequence conflict" description="In Ref. 5; AAA23575." evidence="3" ref="5">
    <original>G</original>
    <variation>R</variation>
    <location>
        <position position="16"/>
    </location>
</feature>
<feature type="strand" evidence="4">
    <location>
        <begin position="10"/>
        <end position="13"/>
    </location>
</feature>
<feature type="strand" evidence="4">
    <location>
        <begin position="17"/>
        <end position="24"/>
    </location>
</feature>
<feature type="strand" evidence="4">
    <location>
        <begin position="27"/>
        <end position="32"/>
    </location>
</feature>
<feature type="helix" evidence="4">
    <location>
        <begin position="33"/>
        <end position="35"/>
    </location>
</feature>
<feature type="strand" evidence="4">
    <location>
        <begin position="36"/>
        <end position="42"/>
    </location>
</feature>
<feature type="strand" evidence="4">
    <location>
        <begin position="55"/>
        <end position="61"/>
    </location>
</feature>
<feature type="strand" evidence="4">
    <location>
        <begin position="64"/>
        <end position="69"/>
    </location>
</feature>
<feature type="helix" evidence="4">
    <location>
        <begin position="71"/>
        <end position="75"/>
    </location>
</feature>
<feature type="strand" evidence="4">
    <location>
        <begin position="87"/>
        <end position="93"/>
    </location>
</feature>
<feature type="strand" evidence="4">
    <location>
        <begin position="96"/>
        <end position="111"/>
    </location>
</feature>
<feature type="turn" evidence="4">
    <location>
        <begin position="113"/>
        <end position="115"/>
    </location>
</feature>
<feature type="strand" evidence="4">
    <location>
        <begin position="122"/>
        <end position="125"/>
    </location>
</feature>
<feature type="helix" evidence="4">
    <location>
        <begin position="128"/>
        <end position="130"/>
    </location>
</feature>
<feature type="strand" evidence="4">
    <location>
        <begin position="133"/>
        <end position="137"/>
    </location>
</feature>
<feature type="strand" evidence="4">
    <location>
        <begin position="140"/>
        <end position="144"/>
    </location>
</feature>
<feature type="helix" evidence="4">
    <location>
        <begin position="147"/>
        <end position="158"/>
    </location>
</feature>
<feature type="helix" evidence="4">
    <location>
        <begin position="159"/>
        <end position="161"/>
    </location>
</feature>
<accession>P0A964</accession>
<accession>P07365</accession>
<comment type="function">
    <text>Involved in the transmission of sensory signals from the chemoreceptors to the flagellar motors. It physically bridges CheA to the MCPs (methyl-accepting chemotaxis proteins) to allow regulated phosphotransfer to CheY and CheB.</text>
</comment>
<comment type="subunit">
    <text evidence="2">An in vitro complex of CheW/CheA(L)/CheA(S) in a 1:1:1 ratio increases the autophosphorylation of CheA and is required for the binding of CheY, the phosphorylation substrate. This complex accounts for 10% of the total number of molecules.</text>
</comment>
<comment type="interaction">
    <interactant intactId="EBI-1125947">
        <id>P0A964</id>
    </interactant>
    <interactant intactId="EBI-1125130">
        <id>P07017</id>
        <label>tar</label>
    </interactant>
    <organismsDiffer>false</organismsDiffer>
    <experiments>5</experiments>
</comment>
<comment type="subcellular location">
    <subcellularLocation>
        <location>Cytoplasm</location>
    </subcellularLocation>
</comment>
<dbReference type="EMBL" id="AH000879">
    <property type="protein sequence ID" value="AAA23565.1"/>
    <property type="molecule type" value="Genomic_DNA"/>
</dbReference>
<dbReference type="EMBL" id="U00096">
    <property type="protein sequence ID" value="AAC74957.1"/>
    <property type="molecule type" value="Genomic_DNA"/>
</dbReference>
<dbReference type="EMBL" id="AP009048">
    <property type="protein sequence ID" value="BAA15703.1"/>
    <property type="molecule type" value="Genomic_DNA"/>
</dbReference>
<dbReference type="EMBL" id="M34669">
    <property type="protein sequence ID" value="AAA23575.1"/>
    <property type="molecule type" value="Genomic_DNA"/>
</dbReference>
<dbReference type="PIR" id="B25195">
    <property type="entry name" value="QRECCW"/>
</dbReference>
<dbReference type="RefSeq" id="NP_416401.1">
    <property type="nucleotide sequence ID" value="NC_000913.3"/>
</dbReference>
<dbReference type="RefSeq" id="WP_000147302.1">
    <property type="nucleotide sequence ID" value="NZ_STEB01000026.1"/>
</dbReference>
<dbReference type="PDB" id="2HO9">
    <property type="method" value="NMR"/>
    <property type="chains" value="A=1-167"/>
</dbReference>
<dbReference type="PDB" id="6S1K">
    <property type="method" value="EM"/>
    <property type="resolution" value="8.38 A"/>
    <property type="chains" value="C/D=1-167"/>
</dbReference>
<dbReference type="PDB" id="8C5V">
    <property type="method" value="EM"/>
    <property type="resolution" value="12.00 A"/>
    <property type="chains" value="E/F/G/H=15-157"/>
</dbReference>
<dbReference type="PDBsum" id="2HO9"/>
<dbReference type="PDBsum" id="6S1K"/>
<dbReference type="PDBsum" id="8C5V"/>
<dbReference type="BMRB" id="P0A964"/>
<dbReference type="EMDB" id="EMD-3234"/>
<dbReference type="EMDB" id="EMD-6319"/>
<dbReference type="EMDB" id="EMD-6320"/>
<dbReference type="SMR" id="P0A964"/>
<dbReference type="BioGRID" id="4261038">
    <property type="interactions" value="259"/>
</dbReference>
<dbReference type="BioGRID" id="850757">
    <property type="interactions" value="2"/>
</dbReference>
<dbReference type="DIP" id="DIP-48236N"/>
<dbReference type="FunCoup" id="P0A964">
    <property type="interactions" value="308"/>
</dbReference>
<dbReference type="IntAct" id="P0A964">
    <property type="interactions" value="31"/>
</dbReference>
<dbReference type="STRING" id="511145.b1887"/>
<dbReference type="PaxDb" id="511145-b1887"/>
<dbReference type="EnsemblBacteria" id="AAC74957">
    <property type="protein sequence ID" value="AAC74957"/>
    <property type="gene ID" value="b1887"/>
</dbReference>
<dbReference type="GeneID" id="93776192"/>
<dbReference type="GeneID" id="946400"/>
<dbReference type="KEGG" id="ecj:JW1876"/>
<dbReference type="KEGG" id="eco:b1887"/>
<dbReference type="KEGG" id="ecoc:C3026_10730"/>
<dbReference type="PATRIC" id="fig|1411691.4.peg.360"/>
<dbReference type="EchoBASE" id="EB0147"/>
<dbReference type="eggNOG" id="COG0835">
    <property type="taxonomic scope" value="Bacteria"/>
</dbReference>
<dbReference type="HOGENOM" id="CLU_048995_1_0_6"/>
<dbReference type="InParanoid" id="P0A964"/>
<dbReference type="OMA" id="CVNIMSV"/>
<dbReference type="OrthoDB" id="9790406at2"/>
<dbReference type="PhylomeDB" id="P0A964"/>
<dbReference type="BioCyc" id="EcoCyc:CHEW-MONOMER"/>
<dbReference type="EvolutionaryTrace" id="P0A964"/>
<dbReference type="PHI-base" id="PHI:6536"/>
<dbReference type="PRO" id="PR:P0A964"/>
<dbReference type="Proteomes" id="UP000000625">
    <property type="component" value="Chromosome"/>
</dbReference>
<dbReference type="GO" id="GO:0051286">
    <property type="term" value="C:cell tip"/>
    <property type="evidence" value="ECO:0000314"/>
    <property type="project" value="CACAO"/>
</dbReference>
<dbReference type="GO" id="GO:0005829">
    <property type="term" value="C:cytosol"/>
    <property type="evidence" value="ECO:0000314"/>
    <property type="project" value="EcoCyc"/>
</dbReference>
<dbReference type="GO" id="GO:0098561">
    <property type="term" value="C:methyl accepting chemotaxis protein complex"/>
    <property type="evidence" value="ECO:0000314"/>
    <property type="project" value="UniProtKB"/>
</dbReference>
<dbReference type="GO" id="GO:0005886">
    <property type="term" value="C:plasma membrane"/>
    <property type="evidence" value="ECO:0000314"/>
    <property type="project" value="UniProtKB"/>
</dbReference>
<dbReference type="GO" id="GO:0019904">
    <property type="term" value="F:protein domain specific binding"/>
    <property type="evidence" value="ECO:0000353"/>
    <property type="project" value="UniProtKB"/>
</dbReference>
<dbReference type="GO" id="GO:0009454">
    <property type="term" value="P:aerotaxis"/>
    <property type="evidence" value="ECO:0000314"/>
    <property type="project" value="EcoCyc"/>
</dbReference>
<dbReference type="GO" id="GO:0006935">
    <property type="term" value="P:chemotaxis"/>
    <property type="evidence" value="ECO:0000315"/>
    <property type="project" value="EcoCyc"/>
</dbReference>
<dbReference type="GO" id="GO:0051649">
    <property type="term" value="P:establishment of localization in cell"/>
    <property type="evidence" value="ECO:0000315"/>
    <property type="project" value="CACAO"/>
</dbReference>
<dbReference type="GO" id="GO:1901875">
    <property type="term" value="P:positive regulation of post-translational protein modification"/>
    <property type="evidence" value="ECO:0000314"/>
    <property type="project" value="CAFA"/>
</dbReference>
<dbReference type="GO" id="GO:0007165">
    <property type="term" value="P:signal transduction"/>
    <property type="evidence" value="ECO:0000314"/>
    <property type="project" value="EcoCyc"/>
</dbReference>
<dbReference type="CDD" id="cd00732">
    <property type="entry name" value="CheW"/>
    <property type="match status" value="1"/>
</dbReference>
<dbReference type="FunFam" id="2.40.50.180:FF:000002">
    <property type="entry name" value="Chemotaxis protein CheW"/>
    <property type="match status" value="1"/>
</dbReference>
<dbReference type="Gene3D" id="2.40.50.180">
    <property type="entry name" value="CheA-289, Domain 4"/>
    <property type="match status" value="1"/>
</dbReference>
<dbReference type="Gene3D" id="2.30.30.40">
    <property type="entry name" value="SH3 Domains"/>
    <property type="match status" value="1"/>
</dbReference>
<dbReference type="InterPro" id="IPR039315">
    <property type="entry name" value="CheW"/>
</dbReference>
<dbReference type="InterPro" id="IPR036061">
    <property type="entry name" value="CheW-like_dom_sf"/>
</dbReference>
<dbReference type="InterPro" id="IPR002545">
    <property type="entry name" value="CheW-lke_dom"/>
</dbReference>
<dbReference type="NCBIfam" id="NF007903">
    <property type="entry name" value="PRK10612.1"/>
    <property type="match status" value="1"/>
</dbReference>
<dbReference type="PANTHER" id="PTHR22617:SF45">
    <property type="entry name" value="CHEMOTAXIS PROTEIN CHEW"/>
    <property type="match status" value="1"/>
</dbReference>
<dbReference type="PANTHER" id="PTHR22617">
    <property type="entry name" value="CHEMOTAXIS SENSOR HISTIDINE KINASE-RELATED"/>
    <property type="match status" value="1"/>
</dbReference>
<dbReference type="Pfam" id="PF01584">
    <property type="entry name" value="CheW"/>
    <property type="match status" value="1"/>
</dbReference>
<dbReference type="SMART" id="SM00260">
    <property type="entry name" value="CheW"/>
    <property type="match status" value="1"/>
</dbReference>
<dbReference type="SUPFAM" id="SSF50341">
    <property type="entry name" value="CheW-like"/>
    <property type="match status" value="1"/>
</dbReference>
<dbReference type="PROSITE" id="PS50851">
    <property type="entry name" value="CHEW"/>
    <property type="match status" value="1"/>
</dbReference>
<gene>
    <name type="primary">cheW</name>
    <name type="ordered locus">b1887</name>
    <name type="ordered locus">JW1876</name>
</gene>